<gene>
    <name evidence="1" type="primary">lon</name>
    <name type="ordered locus">Rcas_2557</name>
</gene>
<dbReference type="EC" id="3.4.21.53" evidence="1"/>
<dbReference type="EMBL" id="CP000804">
    <property type="protein sequence ID" value="ABU58635.1"/>
    <property type="molecule type" value="Genomic_DNA"/>
</dbReference>
<dbReference type="RefSeq" id="WP_012121059.1">
    <property type="nucleotide sequence ID" value="NC_009767.1"/>
</dbReference>
<dbReference type="SMR" id="A7NM80"/>
<dbReference type="STRING" id="383372.Rcas_2557"/>
<dbReference type="MEROPS" id="S16.001"/>
<dbReference type="KEGG" id="rca:Rcas_2557"/>
<dbReference type="eggNOG" id="COG0466">
    <property type="taxonomic scope" value="Bacteria"/>
</dbReference>
<dbReference type="HOGENOM" id="CLU_004109_4_3_0"/>
<dbReference type="OrthoDB" id="9803599at2"/>
<dbReference type="Proteomes" id="UP000000263">
    <property type="component" value="Chromosome"/>
</dbReference>
<dbReference type="GO" id="GO:0005737">
    <property type="term" value="C:cytoplasm"/>
    <property type="evidence" value="ECO:0007669"/>
    <property type="project" value="UniProtKB-SubCell"/>
</dbReference>
<dbReference type="GO" id="GO:0005524">
    <property type="term" value="F:ATP binding"/>
    <property type="evidence" value="ECO:0007669"/>
    <property type="project" value="UniProtKB-UniRule"/>
</dbReference>
<dbReference type="GO" id="GO:0016887">
    <property type="term" value="F:ATP hydrolysis activity"/>
    <property type="evidence" value="ECO:0007669"/>
    <property type="project" value="UniProtKB-UniRule"/>
</dbReference>
<dbReference type="GO" id="GO:0004176">
    <property type="term" value="F:ATP-dependent peptidase activity"/>
    <property type="evidence" value="ECO:0007669"/>
    <property type="project" value="UniProtKB-UniRule"/>
</dbReference>
<dbReference type="GO" id="GO:0043565">
    <property type="term" value="F:sequence-specific DNA binding"/>
    <property type="evidence" value="ECO:0007669"/>
    <property type="project" value="UniProtKB-UniRule"/>
</dbReference>
<dbReference type="GO" id="GO:0004252">
    <property type="term" value="F:serine-type endopeptidase activity"/>
    <property type="evidence" value="ECO:0007669"/>
    <property type="project" value="UniProtKB-UniRule"/>
</dbReference>
<dbReference type="GO" id="GO:0034605">
    <property type="term" value="P:cellular response to heat"/>
    <property type="evidence" value="ECO:0007669"/>
    <property type="project" value="UniProtKB-UniRule"/>
</dbReference>
<dbReference type="GO" id="GO:0006515">
    <property type="term" value="P:protein quality control for misfolded or incompletely synthesized proteins"/>
    <property type="evidence" value="ECO:0007669"/>
    <property type="project" value="UniProtKB-UniRule"/>
</dbReference>
<dbReference type="CDD" id="cd19500">
    <property type="entry name" value="RecA-like_Lon"/>
    <property type="match status" value="1"/>
</dbReference>
<dbReference type="FunFam" id="1.20.5.5270:FF:000002">
    <property type="entry name" value="Lon protease homolog"/>
    <property type="match status" value="1"/>
</dbReference>
<dbReference type="FunFam" id="3.40.50.300:FF:000382">
    <property type="entry name" value="Lon protease homolog 2, peroxisomal"/>
    <property type="match status" value="1"/>
</dbReference>
<dbReference type="Gene3D" id="1.10.8.60">
    <property type="match status" value="1"/>
</dbReference>
<dbReference type="Gene3D" id="1.20.5.5270">
    <property type="match status" value="1"/>
</dbReference>
<dbReference type="Gene3D" id="1.20.58.1480">
    <property type="match status" value="1"/>
</dbReference>
<dbReference type="Gene3D" id="3.30.230.10">
    <property type="match status" value="1"/>
</dbReference>
<dbReference type="Gene3D" id="2.30.130.40">
    <property type="entry name" value="LON domain-like"/>
    <property type="match status" value="1"/>
</dbReference>
<dbReference type="Gene3D" id="3.40.50.300">
    <property type="entry name" value="P-loop containing nucleotide triphosphate hydrolases"/>
    <property type="match status" value="1"/>
</dbReference>
<dbReference type="HAMAP" id="MF_01973">
    <property type="entry name" value="lon_bact"/>
    <property type="match status" value="1"/>
</dbReference>
<dbReference type="InterPro" id="IPR003593">
    <property type="entry name" value="AAA+_ATPase"/>
</dbReference>
<dbReference type="InterPro" id="IPR003959">
    <property type="entry name" value="ATPase_AAA_core"/>
</dbReference>
<dbReference type="InterPro" id="IPR027543">
    <property type="entry name" value="Lon_bac"/>
</dbReference>
<dbReference type="InterPro" id="IPR004815">
    <property type="entry name" value="Lon_bac/euk-typ"/>
</dbReference>
<dbReference type="InterPro" id="IPR054594">
    <property type="entry name" value="Lon_lid"/>
</dbReference>
<dbReference type="InterPro" id="IPR008269">
    <property type="entry name" value="Lon_proteolytic"/>
</dbReference>
<dbReference type="InterPro" id="IPR027065">
    <property type="entry name" value="Lon_Prtase"/>
</dbReference>
<dbReference type="InterPro" id="IPR003111">
    <property type="entry name" value="Lon_prtase_N"/>
</dbReference>
<dbReference type="InterPro" id="IPR046336">
    <property type="entry name" value="Lon_prtase_N_sf"/>
</dbReference>
<dbReference type="InterPro" id="IPR027417">
    <property type="entry name" value="P-loop_NTPase"/>
</dbReference>
<dbReference type="InterPro" id="IPR008268">
    <property type="entry name" value="Peptidase_S16_AS"/>
</dbReference>
<dbReference type="InterPro" id="IPR015947">
    <property type="entry name" value="PUA-like_sf"/>
</dbReference>
<dbReference type="InterPro" id="IPR020568">
    <property type="entry name" value="Ribosomal_Su5_D2-typ_SF"/>
</dbReference>
<dbReference type="InterPro" id="IPR014721">
    <property type="entry name" value="Ribsml_uS5_D2-typ_fold_subgr"/>
</dbReference>
<dbReference type="NCBIfam" id="TIGR00763">
    <property type="entry name" value="lon"/>
    <property type="match status" value="1"/>
</dbReference>
<dbReference type="PANTHER" id="PTHR10046">
    <property type="entry name" value="ATP DEPENDENT LON PROTEASE FAMILY MEMBER"/>
    <property type="match status" value="1"/>
</dbReference>
<dbReference type="Pfam" id="PF00004">
    <property type="entry name" value="AAA"/>
    <property type="match status" value="1"/>
</dbReference>
<dbReference type="Pfam" id="PF05362">
    <property type="entry name" value="Lon_C"/>
    <property type="match status" value="1"/>
</dbReference>
<dbReference type="Pfam" id="PF22667">
    <property type="entry name" value="Lon_lid"/>
    <property type="match status" value="1"/>
</dbReference>
<dbReference type="Pfam" id="PF02190">
    <property type="entry name" value="LON_substr_bdg"/>
    <property type="match status" value="1"/>
</dbReference>
<dbReference type="PIRSF" id="PIRSF001174">
    <property type="entry name" value="Lon_proteas"/>
    <property type="match status" value="1"/>
</dbReference>
<dbReference type="PRINTS" id="PR00830">
    <property type="entry name" value="ENDOLAPTASE"/>
</dbReference>
<dbReference type="SMART" id="SM00382">
    <property type="entry name" value="AAA"/>
    <property type="match status" value="1"/>
</dbReference>
<dbReference type="SMART" id="SM00464">
    <property type="entry name" value="LON"/>
    <property type="match status" value="1"/>
</dbReference>
<dbReference type="SUPFAM" id="SSF52540">
    <property type="entry name" value="P-loop containing nucleoside triphosphate hydrolases"/>
    <property type="match status" value="1"/>
</dbReference>
<dbReference type="SUPFAM" id="SSF88697">
    <property type="entry name" value="PUA domain-like"/>
    <property type="match status" value="1"/>
</dbReference>
<dbReference type="SUPFAM" id="SSF54211">
    <property type="entry name" value="Ribosomal protein S5 domain 2-like"/>
    <property type="match status" value="1"/>
</dbReference>
<dbReference type="PROSITE" id="PS51787">
    <property type="entry name" value="LON_N"/>
    <property type="match status" value="1"/>
</dbReference>
<dbReference type="PROSITE" id="PS51786">
    <property type="entry name" value="LON_PROTEOLYTIC"/>
    <property type="match status" value="1"/>
</dbReference>
<dbReference type="PROSITE" id="PS01046">
    <property type="entry name" value="LON_SER"/>
    <property type="match status" value="1"/>
</dbReference>
<sequence length="802" mass="88113">MSTPLPTQDPPDIPEVLPILPLNNVVLFPGMFLPLVVSGDTWVKLVDEAALATKMVGVFMRTQPGEGFDPLALARTGAVALIVRMLRLPHGAVQILVQGQARIQIRQLIVTEPYPQARVAIHRDPAVLSVEVSGLARAALAAFQQIIQLSPTLPDELAIVAANTAQPGMLADLIAANLNLKPEDQQLVLDTLDVQERLRQVLSFLEREREILTIGRKAQEEMSKSQREYVLRQQLEAIKRELGETDDHAAEIAELRRRLEAANLPEEARKEAEREISRLERMPPGAAEYVVARTYLDWLLDLPWNVSTEDNLDLTQARQVLDEDHYDLERIKERIIEYLAVRKLRLEQDASGSARGPILCFVGPPGVGKTSLGTSIARALGRKFVRVALGGVRDEAEIRGHRRTYIGALPGRIIQGINRAGSNNPVFMLDEVDKLSVGFQGDPAAALLEVLDPEQNVAFVDRYLDVPFDLSRALFICTANRSDTIPPALLDRMELLELAGYTEMEKLEICRRYLIQRQRNEQGLAERAPTITEAALRRLIREYTHEAGVRDLERRIGAIYRKMATRAAEGQPLPDQVDAPDLDDLLGPPRFRSETLLGEDEVGVVTGLAWTPTGGDVLFVEASVVPGNGQLTLTGQLGDVMKESARAALTYARSRARALNIPTDFAQICDIHIHVPAGAVPKDGPSAGITMASALISALTDRRAYKHVAMTGEITLRGKVLPIGGVKEKVLAAQRAGVRTVLLPKANAPDLRELPEETRQQIDIVLVEHMDEVLPRVLHPKSESVTLAEPAPPDGAGTVQAT</sequence>
<organism>
    <name type="scientific">Roseiflexus castenholzii (strain DSM 13941 / HLO8)</name>
    <dbReference type="NCBI Taxonomy" id="383372"/>
    <lineage>
        <taxon>Bacteria</taxon>
        <taxon>Bacillati</taxon>
        <taxon>Chloroflexota</taxon>
        <taxon>Chloroflexia</taxon>
        <taxon>Chloroflexales</taxon>
        <taxon>Roseiflexineae</taxon>
        <taxon>Roseiflexaceae</taxon>
        <taxon>Roseiflexus</taxon>
    </lineage>
</organism>
<evidence type="ECO:0000255" key="1">
    <source>
        <dbReference type="HAMAP-Rule" id="MF_01973"/>
    </source>
</evidence>
<evidence type="ECO:0000255" key="2">
    <source>
        <dbReference type="PROSITE-ProRule" id="PRU01122"/>
    </source>
</evidence>
<evidence type="ECO:0000255" key="3">
    <source>
        <dbReference type="PROSITE-ProRule" id="PRU01123"/>
    </source>
</evidence>
<accession>A7NM80</accession>
<name>LON_ROSCS</name>
<keyword id="KW-0067">ATP-binding</keyword>
<keyword id="KW-0963">Cytoplasm</keyword>
<keyword id="KW-0378">Hydrolase</keyword>
<keyword id="KW-0547">Nucleotide-binding</keyword>
<keyword id="KW-0645">Protease</keyword>
<keyword id="KW-1185">Reference proteome</keyword>
<keyword id="KW-0720">Serine protease</keyword>
<keyword id="KW-0346">Stress response</keyword>
<reference key="1">
    <citation type="submission" date="2007-08" db="EMBL/GenBank/DDBJ databases">
        <title>Complete sequence of Roseiflexus castenholzii DSM 13941.</title>
        <authorList>
            <consortium name="US DOE Joint Genome Institute"/>
            <person name="Copeland A."/>
            <person name="Lucas S."/>
            <person name="Lapidus A."/>
            <person name="Barry K."/>
            <person name="Glavina del Rio T."/>
            <person name="Dalin E."/>
            <person name="Tice H."/>
            <person name="Pitluck S."/>
            <person name="Thompson L.S."/>
            <person name="Brettin T."/>
            <person name="Bruce D."/>
            <person name="Detter J.C."/>
            <person name="Han C."/>
            <person name="Tapia R."/>
            <person name="Schmutz J."/>
            <person name="Larimer F."/>
            <person name="Land M."/>
            <person name="Hauser L."/>
            <person name="Kyrpides N."/>
            <person name="Mikhailova N."/>
            <person name="Bryant D.A."/>
            <person name="Hanada S."/>
            <person name="Tsukatani Y."/>
            <person name="Richardson P."/>
        </authorList>
    </citation>
    <scope>NUCLEOTIDE SEQUENCE [LARGE SCALE GENOMIC DNA]</scope>
    <source>
        <strain>DSM 13941 / HLO8</strain>
    </source>
</reference>
<feature type="chain" id="PRO_0000396595" description="Lon protease">
    <location>
        <begin position="1"/>
        <end position="802"/>
    </location>
</feature>
<feature type="domain" description="Lon N-terminal" evidence="3">
    <location>
        <begin position="17"/>
        <end position="209"/>
    </location>
</feature>
<feature type="domain" description="Lon proteolytic" evidence="2">
    <location>
        <begin position="599"/>
        <end position="780"/>
    </location>
</feature>
<feature type="active site" evidence="1">
    <location>
        <position position="686"/>
    </location>
</feature>
<feature type="active site" evidence="1">
    <location>
        <position position="729"/>
    </location>
</feature>
<feature type="binding site" evidence="1">
    <location>
        <begin position="363"/>
        <end position="370"/>
    </location>
    <ligand>
        <name>ATP</name>
        <dbReference type="ChEBI" id="CHEBI:30616"/>
    </ligand>
</feature>
<proteinExistence type="inferred from homology"/>
<comment type="function">
    <text evidence="1">ATP-dependent serine protease that mediates the selective degradation of mutant and abnormal proteins as well as certain short-lived regulatory proteins. Required for cellular homeostasis and for survival from DNA damage and developmental changes induced by stress. Degrades polypeptides processively to yield small peptide fragments that are 5 to 10 amino acids long. Binds to DNA in a double-stranded, site-specific manner.</text>
</comment>
<comment type="catalytic activity">
    <reaction evidence="1">
        <text>Hydrolysis of proteins in presence of ATP.</text>
        <dbReference type="EC" id="3.4.21.53"/>
    </reaction>
</comment>
<comment type="subunit">
    <text evidence="1">Homohexamer. Organized in a ring with a central cavity.</text>
</comment>
<comment type="subcellular location">
    <subcellularLocation>
        <location evidence="1">Cytoplasm</location>
    </subcellularLocation>
</comment>
<comment type="induction">
    <text evidence="1">By heat shock.</text>
</comment>
<comment type="similarity">
    <text evidence="1">Belongs to the peptidase S16 family.</text>
</comment>
<protein>
    <recommendedName>
        <fullName evidence="1">Lon protease</fullName>
        <ecNumber evidence="1">3.4.21.53</ecNumber>
    </recommendedName>
    <alternativeName>
        <fullName evidence="1">ATP-dependent protease La</fullName>
    </alternativeName>
</protein>